<reference key="1">
    <citation type="journal article" date="1991" name="Biochem. J.">
        <title>Amino acid sequences of Euglena viridis ferredoxin and cytochromes c.</title>
        <authorList>
            <person name="Ambler R.P."/>
            <person name="Kamen M.D."/>
            <person name="Bartsch R.G."/>
            <person name="Meyer T.E."/>
        </authorList>
    </citation>
    <scope>PROTEIN SEQUENCE</scope>
    <scope>ACETYLATION AT GLY-1</scope>
    <scope>METHYLATION AT LYS-85</scope>
    <source>
        <strain>LJ-1</strain>
    </source>
</reference>
<keyword id="KW-0007">Acetylation</keyword>
<keyword id="KW-0903">Direct protein sequencing</keyword>
<keyword id="KW-0249">Electron transport</keyword>
<keyword id="KW-0349">Heme</keyword>
<keyword id="KW-0408">Iron</keyword>
<keyword id="KW-0479">Metal-binding</keyword>
<keyword id="KW-0488">Methylation</keyword>
<keyword id="KW-0496">Mitochondrion</keyword>
<keyword id="KW-0679">Respiratory chain</keyword>
<keyword id="KW-0813">Transport</keyword>
<sequence>GDAERGKKLFESRAGQCHSSQKGVNSTGPALYGVYGRTSGTVPGYAYSNANKNAAIVWEDESLNKFLENPKKYVPGTKMAFAGIKAKKDRLDIIAYMKTLKD</sequence>
<comment type="function">
    <text>Electron carrier protein. The oxidized form of the cytochrome c heme group can accept an electron from the heme group of the cytochrome c1 subunit of cytochrome reductase. Cytochrome c then transfers this electron to the cytochrome oxidase complex, the final protein carrier in the mitochondrial electron-transport chain.</text>
</comment>
<comment type="subcellular location">
    <subcellularLocation>
        <location>Mitochondrion intermembrane space</location>
    </subcellularLocation>
    <text>Loosely associated with the inner membrane.</text>
</comment>
<comment type="PTM">
    <text>Binds 1 heme c group covalently per subunit.</text>
</comment>
<comment type="similarity">
    <text evidence="5">Belongs to the cytochrome c family.</text>
</comment>
<dbReference type="PIR" id="S15454">
    <property type="entry name" value="S15454"/>
</dbReference>
<dbReference type="SMR" id="P22342"/>
<dbReference type="iPTMnet" id="P22342"/>
<dbReference type="GO" id="GO:0005758">
    <property type="term" value="C:mitochondrial intermembrane space"/>
    <property type="evidence" value="ECO:0007669"/>
    <property type="project" value="UniProtKB-SubCell"/>
</dbReference>
<dbReference type="GO" id="GO:0009055">
    <property type="term" value="F:electron transfer activity"/>
    <property type="evidence" value="ECO:0007669"/>
    <property type="project" value="InterPro"/>
</dbReference>
<dbReference type="GO" id="GO:0020037">
    <property type="term" value="F:heme binding"/>
    <property type="evidence" value="ECO:0007669"/>
    <property type="project" value="InterPro"/>
</dbReference>
<dbReference type="GO" id="GO:0046872">
    <property type="term" value="F:metal ion binding"/>
    <property type="evidence" value="ECO:0007669"/>
    <property type="project" value="UniProtKB-KW"/>
</dbReference>
<dbReference type="FunFam" id="1.10.760.10:FF:000001">
    <property type="entry name" value="Cytochrome c iso-1"/>
    <property type="match status" value="1"/>
</dbReference>
<dbReference type="Gene3D" id="1.10.760.10">
    <property type="entry name" value="Cytochrome c-like domain"/>
    <property type="match status" value="1"/>
</dbReference>
<dbReference type="InterPro" id="IPR009056">
    <property type="entry name" value="Cyt_c-like_dom"/>
</dbReference>
<dbReference type="InterPro" id="IPR036909">
    <property type="entry name" value="Cyt_c-like_dom_sf"/>
</dbReference>
<dbReference type="InterPro" id="IPR002327">
    <property type="entry name" value="Cyt_c_1A/1B"/>
</dbReference>
<dbReference type="PANTHER" id="PTHR11961">
    <property type="entry name" value="CYTOCHROME C"/>
    <property type="match status" value="1"/>
</dbReference>
<dbReference type="Pfam" id="PF00034">
    <property type="entry name" value="Cytochrom_C"/>
    <property type="match status" value="1"/>
</dbReference>
<dbReference type="PRINTS" id="PR00604">
    <property type="entry name" value="CYTCHRMECIAB"/>
</dbReference>
<dbReference type="SUPFAM" id="SSF46626">
    <property type="entry name" value="Cytochrome c"/>
    <property type="match status" value="1"/>
</dbReference>
<dbReference type="PROSITE" id="PS51007">
    <property type="entry name" value="CYTC"/>
    <property type="match status" value="1"/>
</dbReference>
<organism>
    <name type="scientific">Euglena viridis</name>
    <name type="common">Cercaria viridis</name>
    <dbReference type="NCBI Taxonomy" id="3040"/>
    <lineage>
        <taxon>Eukaryota</taxon>
        <taxon>Discoba</taxon>
        <taxon>Euglenozoa</taxon>
        <taxon>Euglenida</taxon>
        <taxon>Spirocuta</taxon>
        <taxon>Euglenophyceae</taxon>
        <taxon>Euglenales</taxon>
        <taxon>Euglenaceae</taxon>
        <taxon>Euglena</taxon>
    </lineage>
</organism>
<protein>
    <recommendedName>
        <fullName>Cytochrome c</fullName>
    </recommendedName>
</protein>
<feature type="chain" id="PRO_0000108315" description="Cytochrome c">
    <location>
        <begin position="1"/>
        <end position="102"/>
    </location>
</feature>
<feature type="region of interest" description="Disordered" evidence="3">
    <location>
        <begin position="1"/>
        <end position="26"/>
    </location>
</feature>
<feature type="compositionally biased region" description="Basic and acidic residues" evidence="3">
    <location>
        <begin position="1"/>
        <end position="11"/>
    </location>
</feature>
<feature type="compositionally biased region" description="Polar residues" evidence="3">
    <location>
        <begin position="17"/>
        <end position="26"/>
    </location>
</feature>
<feature type="binding site" description="covalent" evidence="1">
    <location>
        <position position="17"/>
    </location>
    <ligand>
        <name>heme c</name>
        <dbReference type="ChEBI" id="CHEBI:61717"/>
    </ligand>
</feature>
<feature type="binding site" description="axial binding residue" evidence="2">
    <location>
        <position position="18"/>
    </location>
    <ligand>
        <name>heme c</name>
        <dbReference type="ChEBI" id="CHEBI:61717"/>
    </ligand>
    <ligandPart>
        <name>Fe</name>
        <dbReference type="ChEBI" id="CHEBI:18248"/>
    </ligandPart>
</feature>
<feature type="binding site" description="axial binding residue" evidence="2">
    <location>
        <position position="79"/>
    </location>
    <ligand>
        <name>heme c</name>
        <dbReference type="ChEBI" id="CHEBI:61717"/>
    </ligand>
    <ligandPart>
        <name>Fe</name>
        <dbReference type="ChEBI" id="CHEBI:18248"/>
    </ligandPart>
</feature>
<feature type="modified residue" description="N-acetylglycine" evidence="4">
    <location>
        <position position="1"/>
    </location>
</feature>
<feature type="modified residue" description="N6,N6,N6-trimethyllysine" evidence="4">
    <location>
        <position position="85"/>
    </location>
</feature>
<proteinExistence type="evidence at protein level"/>
<evidence type="ECO:0000250" key="1"/>
<evidence type="ECO:0000255" key="2">
    <source>
        <dbReference type="PROSITE-ProRule" id="PRU00433"/>
    </source>
</evidence>
<evidence type="ECO:0000256" key="3">
    <source>
        <dbReference type="SAM" id="MobiDB-lite"/>
    </source>
</evidence>
<evidence type="ECO:0000269" key="4">
    <source>
    </source>
</evidence>
<evidence type="ECO:0000305" key="5"/>
<name>CYC_EUGVI</name>
<accession>P22342</accession>